<keyword id="KW-0963">Cytoplasm</keyword>
<keyword id="KW-0647">Proteasome</keyword>
<organism>
    <name type="scientific">Mycobacterium sp. (strain JLS)</name>
    <dbReference type="NCBI Taxonomy" id="164757"/>
    <lineage>
        <taxon>Bacteria</taxon>
        <taxon>Bacillati</taxon>
        <taxon>Actinomycetota</taxon>
        <taxon>Actinomycetes</taxon>
        <taxon>Mycobacteriales</taxon>
        <taxon>Mycobacteriaceae</taxon>
        <taxon>Mycobacterium</taxon>
    </lineage>
</organism>
<protein>
    <recommendedName>
        <fullName evidence="1">Proteasome subunit alpha</fullName>
    </recommendedName>
    <alternativeName>
        <fullName evidence="1">20S proteasome alpha subunit</fullName>
    </alternativeName>
    <alternativeName>
        <fullName evidence="1">Proteasome core protein PrcA</fullName>
    </alternativeName>
</protein>
<feature type="chain" id="PRO_0000397155" description="Proteasome subunit alpha">
    <location>
        <begin position="1"/>
        <end position="250"/>
    </location>
</feature>
<evidence type="ECO:0000255" key="1">
    <source>
        <dbReference type="HAMAP-Rule" id="MF_00289"/>
    </source>
</evidence>
<comment type="function">
    <text evidence="1">Component of the proteasome core, a large protease complex with broad specificity involved in protein degradation.</text>
</comment>
<comment type="activity regulation">
    <text evidence="1">The formation of the proteasomal ATPase ARC-20S proteasome complex, likely via the docking of the C-termini of ARC into the intersubunit pockets in the alpha-rings, may trigger opening of the gate for substrate entry. Interconversion between the open-gate and close-gate conformations leads to a dynamic regulation of the 20S proteasome proteolysis activity.</text>
</comment>
<comment type="pathway">
    <text evidence="1">Protein degradation; proteasomal Pup-dependent pathway.</text>
</comment>
<comment type="subunit">
    <text evidence="1">The 20S proteasome core is composed of 14 alpha and 14 beta subunits that assemble into four stacked heptameric rings, resulting in a barrel-shaped structure. The two inner rings, each composed of seven catalytic beta subunits, are sandwiched by two outer rings, each composed of seven alpha subunits. The catalytic chamber with the active sites is on the inside of the barrel. Has a gated structure, the ends of the cylinder being occluded by the N-termini of the alpha-subunits. Is capped by the proteasome-associated ATPase, ARC.</text>
</comment>
<comment type="subcellular location">
    <subcellularLocation>
        <location evidence="1">Cytoplasm</location>
    </subcellularLocation>
</comment>
<comment type="similarity">
    <text evidence="1">Belongs to the peptidase T1A family.</text>
</comment>
<reference key="1">
    <citation type="submission" date="2007-02" db="EMBL/GenBank/DDBJ databases">
        <title>Complete sequence of Mycobacterium sp. JLS.</title>
        <authorList>
            <consortium name="US DOE Joint Genome Institute"/>
            <person name="Copeland A."/>
            <person name="Lucas S."/>
            <person name="Lapidus A."/>
            <person name="Barry K."/>
            <person name="Detter J.C."/>
            <person name="Glavina del Rio T."/>
            <person name="Hammon N."/>
            <person name="Israni S."/>
            <person name="Dalin E."/>
            <person name="Tice H."/>
            <person name="Pitluck S."/>
            <person name="Chain P."/>
            <person name="Malfatti S."/>
            <person name="Shin M."/>
            <person name="Vergez L."/>
            <person name="Schmutz J."/>
            <person name="Larimer F."/>
            <person name="Land M."/>
            <person name="Hauser L."/>
            <person name="Kyrpides N."/>
            <person name="Mikhailova N."/>
            <person name="Miller C.D."/>
            <person name="Anderson A.J."/>
            <person name="Sims R.C."/>
            <person name="Richardson P."/>
        </authorList>
    </citation>
    <scope>NUCLEOTIDE SEQUENCE [LARGE SCALE GENOMIC DNA]</scope>
    <source>
        <strain>JLS</strain>
    </source>
</reference>
<name>PSA_MYCSJ</name>
<proteinExistence type="inferred from homology"/>
<gene>
    <name evidence="1" type="primary">prcA</name>
    <name type="ordered locus">Mjls_3140</name>
</gene>
<accession>A3Q192</accession>
<sequence>MSFPYFISPEQAMRERSELARKGIARGRSVVALAYADGVLFVAENPSRSLQKVSELYDRVGFAAVGRFNEFNNLRSGGIRFADTQGYAYSRRDVTGRQLANVYAQTLGTIFTEQAKPYEVELCVAEVAHFGESKAPELYRITYDGSIADEPHFVVMGGATEPIIAKLNDSYTENAELADAVRIAVDALESGGNGAERRTLGPSTLEVAILDANRPRRAFRRITGSALEALLPQRDAEASADAGAADKPAE</sequence>
<dbReference type="EMBL" id="CP000580">
    <property type="protein sequence ID" value="ABN98919.1"/>
    <property type="molecule type" value="Genomic_DNA"/>
</dbReference>
<dbReference type="SMR" id="A3Q192"/>
<dbReference type="MEROPS" id="T01.980"/>
<dbReference type="KEGG" id="mjl:Mjls_3140"/>
<dbReference type="HOGENOM" id="CLU_071031_0_0_11"/>
<dbReference type="BioCyc" id="MSP164757:G1G8C-3165-MONOMER"/>
<dbReference type="UniPathway" id="UPA00997"/>
<dbReference type="GO" id="GO:0005737">
    <property type="term" value="C:cytoplasm"/>
    <property type="evidence" value="ECO:0007669"/>
    <property type="project" value="UniProtKB-SubCell"/>
</dbReference>
<dbReference type="GO" id="GO:0019773">
    <property type="term" value="C:proteasome core complex, alpha-subunit complex"/>
    <property type="evidence" value="ECO:0007669"/>
    <property type="project" value="UniProtKB-UniRule"/>
</dbReference>
<dbReference type="GO" id="GO:0004298">
    <property type="term" value="F:threonine-type endopeptidase activity"/>
    <property type="evidence" value="ECO:0007669"/>
    <property type="project" value="InterPro"/>
</dbReference>
<dbReference type="GO" id="GO:0019941">
    <property type="term" value="P:modification-dependent protein catabolic process"/>
    <property type="evidence" value="ECO:0007669"/>
    <property type="project" value="UniProtKB-UniRule"/>
</dbReference>
<dbReference type="GO" id="GO:0010498">
    <property type="term" value="P:proteasomal protein catabolic process"/>
    <property type="evidence" value="ECO:0007669"/>
    <property type="project" value="UniProtKB-UniRule"/>
</dbReference>
<dbReference type="CDD" id="cd01901">
    <property type="entry name" value="Ntn_hydrolase"/>
    <property type="match status" value="1"/>
</dbReference>
<dbReference type="FunFam" id="3.60.20.10:FF:000023">
    <property type="entry name" value="Proteasome subunit alpha"/>
    <property type="match status" value="1"/>
</dbReference>
<dbReference type="Gene3D" id="3.60.20.10">
    <property type="entry name" value="Glutamine Phosphoribosylpyrophosphate, subunit 1, domain 1"/>
    <property type="match status" value="1"/>
</dbReference>
<dbReference type="HAMAP" id="MF_00289_B">
    <property type="entry name" value="Proteasome_A_B"/>
    <property type="match status" value="1"/>
</dbReference>
<dbReference type="InterPro" id="IPR029055">
    <property type="entry name" value="Ntn_hydrolases_N"/>
</dbReference>
<dbReference type="InterPro" id="IPR050115">
    <property type="entry name" value="Proteasome_alpha"/>
</dbReference>
<dbReference type="InterPro" id="IPR023332">
    <property type="entry name" value="Proteasome_alpha-type"/>
</dbReference>
<dbReference type="InterPro" id="IPR022296">
    <property type="entry name" value="Proteasome_asu_bac"/>
</dbReference>
<dbReference type="InterPro" id="IPR001353">
    <property type="entry name" value="Proteasome_sua/b"/>
</dbReference>
<dbReference type="NCBIfam" id="TIGR03691">
    <property type="entry name" value="20S_bact_alpha"/>
    <property type="match status" value="1"/>
</dbReference>
<dbReference type="PANTHER" id="PTHR11599">
    <property type="entry name" value="PROTEASOME SUBUNIT ALPHA/BETA"/>
    <property type="match status" value="1"/>
</dbReference>
<dbReference type="Pfam" id="PF00227">
    <property type="entry name" value="Proteasome"/>
    <property type="match status" value="1"/>
</dbReference>
<dbReference type="SUPFAM" id="SSF56235">
    <property type="entry name" value="N-terminal nucleophile aminohydrolases (Ntn hydrolases)"/>
    <property type="match status" value="1"/>
</dbReference>
<dbReference type="PROSITE" id="PS51475">
    <property type="entry name" value="PROTEASOME_ALPHA_2"/>
    <property type="match status" value="1"/>
</dbReference>